<organism>
    <name type="scientific">Danio rerio</name>
    <name type="common">Zebrafish</name>
    <name type="synonym">Brachydanio rerio</name>
    <dbReference type="NCBI Taxonomy" id="7955"/>
    <lineage>
        <taxon>Eukaryota</taxon>
        <taxon>Metazoa</taxon>
        <taxon>Chordata</taxon>
        <taxon>Craniata</taxon>
        <taxon>Vertebrata</taxon>
        <taxon>Euteleostomi</taxon>
        <taxon>Actinopterygii</taxon>
        <taxon>Neopterygii</taxon>
        <taxon>Teleostei</taxon>
        <taxon>Ostariophysi</taxon>
        <taxon>Cypriniformes</taxon>
        <taxon>Danionidae</taxon>
        <taxon>Danioninae</taxon>
        <taxon>Danio</taxon>
    </lineage>
</organism>
<dbReference type="EC" id="2.7.11.1" evidence="1"/>
<dbReference type="EMBL" id="BX248399">
    <property type="status" value="NOT_ANNOTATED_CDS"/>
    <property type="molecule type" value="Genomic_DNA"/>
</dbReference>
<dbReference type="EMBL" id="CR925730">
    <property type="status" value="NOT_ANNOTATED_CDS"/>
    <property type="molecule type" value="Genomic_DNA"/>
</dbReference>
<dbReference type="RefSeq" id="NP_001410710.1">
    <property type="nucleotide sequence ID" value="NM_001423781.1"/>
</dbReference>
<dbReference type="RefSeq" id="XP_017208526.1">
    <property type="nucleotide sequence ID" value="XM_017353037.1"/>
</dbReference>
<dbReference type="SMR" id="F1QU13"/>
<dbReference type="FunCoup" id="F1QU13">
    <property type="interactions" value="6"/>
</dbReference>
<dbReference type="STRING" id="7955.ENSDARP00000122327"/>
<dbReference type="PaxDb" id="7955-ENSDARP00000122327"/>
<dbReference type="GeneID" id="559835"/>
<dbReference type="eggNOG" id="ENOG502QPP5">
    <property type="taxonomic scope" value="Eukaryota"/>
</dbReference>
<dbReference type="HOGENOM" id="CLU_293483_0_0_1"/>
<dbReference type="InParanoid" id="F1QU13"/>
<dbReference type="OrthoDB" id="301415at2759"/>
<dbReference type="PRO" id="PR:F1QU13"/>
<dbReference type="Proteomes" id="UP000000437">
    <property type="component" value="Chromosome 21"/>
</dbReference>
<dbReference type="GO" id="GO:0016323">
    <property type="term" value="C:basolateral plasma membrane"/>
    <property type="evidence" value="ECO:0007669"/>
    <property type="project" value="UniProtKB-SubCell"/>
</dbReference>
<dbReference type="GO" id="GO:0005524">
    <property type="term" value="F:ATP binding"/>
    <property type="evidence" value="ECO:0007669"/>
    <property type="project" value="InterPro"/>
</dbReference>
<dbReference type="GO" id="GO:0106310">
    <property type="term" value="F:protein serine kinase activity"/>
    <property type="evidence" value="ECO:0007669"/>
    <property type="project" value="RHEA"/>
</dbReference>
<dbReference type="GO" id="GO:0004674">
    <property type="term" value="F:protein serine/threonine kinase activity"/>
    <property type="evidence" value="ECO:0007669"/>
    <property type="project" value="UniProtKB-KW"/>
</dbReference>
<dbReference type="GO" id="GO:0055013">
    <property type="term" value="P:cardiac muscle cell development"/>
    <property type="evidence" value="ECO:0000315"/>
    <property type="project" value="ZFIN"/>
</dbReference>
<dbReference type="GO" id="GO:1905223">
    <property type="term" value="P:epicardium morphogenesis"/>
    <property type="evidence" value="ECO:0000315"/>
    <property type="project" value="ZFIN"/>
</dbReference>
<dbReference type="GO" id="GO:0060047">
    <property type="term" value="P:heart contraction"/>
    <property type="evidence" value="ECO:0000315"/>
    <property type="project" value="ZFIN"/>
</dbReference>
<dbReference type="GO" id="GO:0003007">
    <property type="term" value="P:heart morphogenesis"/>
    <property type="evidence" value="ECO:0000315"/>
    <property type="project" value="ZFIN"/>
</dbReference>
<dbReference type="Gene3D" id="2.60.40.10">
    <property type="entry name" value="Immunoglobulins"/>
    <property type="match status" value="1"/>
</dbReference>
<dbReference type="Gene3D" id="3.20.200.10">
    <property type="entry name" value="MHCK/EF2 kinase"/>
    <property type="match status" value="1"/>
</dbReference>
<dbReference type="InterPro" id="IPR004166">
    <property type="entry name" value="a-kinase_dom"/>
</dbReference>
<dbReference type="InterPro" id="IPR007110">
    <property type="entry name" value="Ig-like_dom"/>
</dbReference>
<dbReference type="InterPro" id="IPR036179">
    <property type="entry name" value="Ig-like_dom_sf"/>
</dbReference>
<dbReference type="InterPro" id="IPR013783">
    <property type="entry name" value="Ig-like_fold"/>
</dbReference>
<dbReference type="InterPro" id="IPR011009">
    <property type="entry name" value="Kinase-like_dom_sf"/>
</dbReference>
<dbReference type="PANTHER" id="PTHR47091:SF2">
    <property type="entry name" value="ALPHA-PROTEIN KINASE 2"/>
    <property type="match status" value="1"/>
</dbReference>
<dbReference type="PANTHER" id="PTHR47091">
    <property type="entry name" value="ALPHA-PROTEIN KINASE 2-RELATED"/>
    <property type="match status" value="1"/>
</dbReference>
<dbReference type="Pfam" id="PF02816">
    <property type="entry name" value="Alpha_kinase"/>
    <property type="match status" value="1"/>
</dbReference>
<dbReference type="SMART" id="SM00811">
    <property type="entry name" value="Alpha_kinase"/>
    <property type="match status" value="1"/>
</dbReference>
<dbReference type="SUPFAM" id="SSF48726">
    <property type="entry name" value="Immunoglobulin"/>
    <property type="match status" value="1"/>
</dbReference>
<dbReference type="SUPFAM" id="SSF56112">
    <property type="entry name" value="Protein kinase-like (PK-like)"/>
    <property type="match status" value="1"/>
</dbReference>
<dbReference type="PROSITE" id="PS51158">
    <property type="entry name" value="ALPHA_KINASE"/>
    <property type="match status" value="1"/>
</dbReference>
<dbReference type="PROSITE" id="PS50835">
    <property type="entry name" value="IG_LIKE"/>
    <property type="match status" value="1"/>
</dbReference>
<reference evidence="8" key="1">
    <citation type="journal article" date="2013" name="Nature">
        <title>The zebrafish reference genome sequence and its relationship to the human genome.</title>
        <authorList>
            <person name="Howe K."/>
            <person name="Clark M.D."/>
            <person name="Torroja C.F."/>
            <person name="Torrance J."/>
            <person name="Berthelot C."/>
            <person name="Muffato M."/>
            <person name="Collins J.E."/>
            <person name="Humphray S."/>
            <person name="McLaren K."/>
            <person name="Matthews L."/>
            <person name="McLaren S."/>
            <person name="Sealy I."/>
            <person name="Caccamo M."/>
            <person name="Churcher C."/>
            <person name="Scott C."/>
            <person name="Barrett J.C."/>
            <person name="Koch R."/>
            <person name="Rauch G.J."/>
            <person name="White S."/>
            <person name="Chow W."/>
            <person name="Kilian B."/>
            <person name="Quintais L.T."/>
            <person name="Guerra-Assuncao J.A."/>
            <person name="Zhou Y."/>
            <person name="Gu Y."/>
            <person name="Yen J."/>
            <person name="Vogel J.H."/>
            <person name="Eyre T."/>
            <person name="Redmond S."/>
            <person name="Banerjee R."/>
            <person name="Chi J."/>
            <person name="Fu B."/>
            <person name="Langley E."/>
            <person name="Maguire S.F."/>
            <person name="Laird G.K."/>
            <person name="Lloyd D."/>
            <person name="Kenyon E."/>
            <person name="Donaldson S."/>
            <person name="Sehra H."/>
            <person name="Almeida-King J."/>
            <person name="Loveland J."/>
            <person name="Trevanion S."/>
            <person name="Jones M."/>
            <person name="Quail M."/>
            <person name="Willey D."/>
            <person name="Hunt A."/>
            <person name="Burton J."/>
            <person name="Sims S."/>
            <person name="McLay K."/>
            <person name="Plumb B."/>
            <person name="Davis J."/>
            <person name="Clee C."/>
            <person name="Oliver K."/>
            <person name="Clark R."/>
            <person name="Riddle C."/>
            <person name="Elliot D."/>
            <person name="Threadgold G."/>
            <person name="Harden G."/>
            <person name="Ware D."/>
            <person name="Begum S."/>
            <person name="Mortimore B."/>
            <person name="Kerry G."/>
            <person name="Heath P."/>
            <person name="Phillimore B."/>
            <person name="Tracey A."/>
            <person name="Corby N."/>
            <person name="Dunn M."/>
            <person name="Johnson C."/>
            <person name="Wood J."/>
            <person name="Clark S."/>
            <person name="Pelan S."/>
            <person name="Griffiths G."/>
            <person name="Smith M."/>
            <person name="Glithero R."/>
            <person name="Howden P."/>
            <person name="Barker N."/>
            <person name="Lloyd C."/>
            <person name="Stevens C."/>
            <person name="Harley J."/>
            <person name="Holt K."/>
            <person name="Panagiotidis G."/>
            <person name="Lovell J."/>
            <person name="Beasley H."/>
            <person name="Henderson C."/>
            <person name="Gordon D."/>
            <person name="Auger K."/>
            <person name="Wright D."/>
            <person name="Collins J."/>
            <person name="Raisen C."/>
            <person name="Dyer L."/>
            <person name="Leung K."/>
            <person name="Robertson L."/>
            <person name="Ambridge K."/>
            <person name="Leongamornlert D."/>
            <person name="McGuire S."/>
            <person name="Gilderthorp R."/>
            <person name="Griffiths C."/>
            <person name="Manthravadi D."/>
            <person name="Nichol S."/>
            <person name="Barker G."/>
            <person name="Whitehead S."/>
            <person name="Kay M."/>
            <person name="Brown J."/>
            <person name="Murnane C."/>
            <person name="Gray E."/>
            <person name="Humphries M."/>
            <person name="Sycamore N."/>
            <person name="Barker D."/>
            <person name="Saunders D."/>
            <person name="Wallis J."/>
            <person name="Babbage A."/>
            <person name="Hammond S."/>
            <person name="Mashreghi-Mohammadi M."/>
            <person name="Barr L."/>
            <person name="Martin S."/>
            <person name="Wray P."/>
            <person name="Ellington A."/>
            <person name="Matthews N."/>
            <person name="Ellwood M."/>
            <person name="Woodmansey R."/>
            <person name="Clark G."/>
            <person name="Cooper J."/>
            <person name="Tromans A."/>
            <person name="Grafham D."/>
            <person name="Skuce C."/>
            <person name="Pandian R."/>
            <person name="Andrews R."/>
            <person name="Harrison E."/>
            <person name="Kimberley A."/>
            <person name="Garnett J."/>
            <person name="Fosker N."/>
            <person name="Hall R."/>
            <person name="Garner P."/>
            <person name="Kelly D."/>
            <person name="Bird C."/>
            <person name="Palmer S."/>
            <person name="Gehring I."/>
            <person name="Berger A."/>
            <person name="Dooley C.M."/>
            <person name="Ersan-Urun Z."/>
            <person name="Eser C."/>
            <person name="Geiger H."/>
            <person name="Geisler M."/>
            <person name="Karotki L."/>
            <person name="Kirn A."/>
            <person name="Konantz J."/>
            <person name="Konantz M."/>
            <person name="Oberlander M."/>
            <person name="Rudolph-Geiger S."/>
            <person name="Teucke M."/>
            <person name="Lanz C."/>
            <person name="Raddatz G."/>
            <person name="Osoegawa K."/>
            <person name="Zhu B."/>
            <person name="Rapp A."/>
            <person name="Widaa S."/>
            <person name="Langford C."/>
            <person name="Yang F."/>
            <person name="Schuster S.C."/>
            <person name="Carter N.P."/>
            <person name="Harrow J."/>
            <person name="Ning Z."/>
            <person name="Herrero J."/>
            <person name="Searle S.M."/>
            <person name="Enright A."/>
            <person name="Geisler R."/>
            <person name="Plasterk R.H."/>
            <person name="Lee C."/>
            <person name="Westerfield M."/>
            <person name="de Jong P.J."/>
            <person name="Zon L.I."/>
            <person name="Postlethwait J.H."/>
            <person name="Nusslein-Volhard C."/>
            <person name="Hubbard T.J."/>
            <person name="Roest Crollius H."/>
            <person name="Rogers J."/>
            <person name="Stemple D.L."/>
        </authorList>
    </citation>
    <scope>NUCLEOTIDE SEQUENCE [LARGE SCALE GENOMIC DNA]</scope>
    <source>
        <strain evidence="8">Tuebingen</strain>
    </source>
</reference>
<reference evidence="6" key="2">
    <citation type="journal article" date="2018" name="IScience">
        <title>ALPK2 Promotes Cardiogenesis in Zebrafish and Human Pluripotent Stem Cells.</title>
        <authorList>
            <person name="Hofsteen P."/>
            <person name="Robitaille A.M."/>
            <person name="Strash N."/>
            <person name="Palpant N."/>
            <person name="Moon R.T."/>
            <person name="Pabon L."/>
            <person name="Murry C.E."/>
        </authorList>
    </citation>
    <scope>FUNCTION</scope>
    <scope>TISSUE SPECIFICITY</scope>
    <scope>DEVELOPMENTAL STAGE</scope>
    <scope>DISRUPTION PHENOTYPE</scope>
</reference>
<feature type="chain" id="PRO_0000448062" description="Alpha-protein kinase 2">
    <location>
        <begin position="1"/>
        <end position="1966"/>
    </location>
</feature>
<feature type="domain" description="Ig-like" evidence="2">
    <location>
        <begin position="1577"/>
        <end position="1659"/>
    </location>
</feature>
<feature type="domain" description="Alpha-type protein kinase" evidence="3">
    <location>
        <begin position="1702"/>
        <end position="1934"/>
    </location>
</feature>
<feature type="region of interest" description="Disordered" evidence="4">
    <location>
        <begin position="23"/>
        <end position="65"/>
    </location>
</feature>
<feature type="region of interest" description="Disordered" evidence="4">
    <location>
        <begin position="211"/>
        <end position="231"/>
    </location>
</feature>
<feature type="region of interest" description="Disordered" evidence="4">
    <location>
        <begin position="1211"/>
        <end position="1259"/>
    </location>
</feature>
<feature type="region of interest" description="Disordered" evidence="4">
    <location>
        <begin position="1303"/>
        <end position="1365"/>
    </location>
</feature>
<feature type="region of interest" description="Disordered" evidence="4">
    <location>
        <begin position="1386"/>
        <end position="1423"/>
    </location>
</feature>
<feature type="region of interest" description="Disordered" evidence="4">
    <location>
        <begin position="1437"/>
        <end position="1463"/>
    </location>
</feature>
<feature type="region of interest" description="Disordered" evidence="4">
    <location>
        <begin position="1937"/>
        <end position="1966"/>
    </location>
</feature>
<feature type="compositionally biased region" description="Polar residues" evidence="4">
    <location>
        <begin position="211"/>
        <end position="227"/>
    </location>
</feature>
<feature type="compositionally biased region" description="Low complexity" evidence="4">
    <location>
        <begin position="1211"/>
        <end position="1221"/>
    </location>
</feature>
<feature type="compositionally biased region" description="Basic and acidic residues" evidence="4">
    <location>
        <begin position="1325"/>
        <end position="1342"/>
    </location>
</feature>
<feature type="compositionally biased region" description="Basic residues" evidence="4">
    <location>
        <begin position="1388"/>
        <end position="1397"/>
    </location>
</feature>
<feature type="compositionally biased region" description="Basic and acidic residues" evidence="4">
    <location>
        <begin position="1401"/>
        <end position="1417"/>
    </location>
</feature>
<feature type="disulfide bond" evidence="2">
    <location>
        <begin position="1599"/>
        <end position="1649"/>
    </location>
</feature>
<keyword id="KW-1003">Cell membrane</keyword>
<keyword id="KW-1015">Disulfide bond</keyword>
<keyword id="KW-0393">Immunoglobulin domain</keyword>
<keyword id="KW-0418">Kinase</keyword>
<keyword id="KW-0472">Membrane</keyword>
<keyword id="KW-1185">Reference proteome</keyword>
<keyword id="KW-0723">Serine/threonine-protein kinase</keyword>
<keyword id="KW-0808">Transferase</keyword>
<comment type="function">
    <text evidence="1 5">Protein kinase that recognizes phosphorylation sites in which the surrounding peptides have an alpha-helical conformation (By similarity). Regulates cardiac development and cardiomyocyte differentiation by negatively regulating Wnt/beta-catenin signaling (PubMed:29888752).</text>
</comment>
<comment type="catalytic activity">
    <reaction evidence="1">
        <text>L-seryl-[protein] + ATP = O-phospho-L-seryl-[protein] + ADP + H(+)</text>
        <dbReference type="Rhea" id="RHEA:17989"/>
        <dbReference type="Rhea" id="RHEA-COMP:9863"/>
        <dbReference type="Rhea" id="RHEA-COMP:11604"/>
        <dbReference type="ChEBI" id="CHEBI:15378"/>
        <dbReference type="ChEBI" id="CHEBI:29999"/>
        <dbReference type="ChEBI" id="CHEBI:30616"/>
        <dbReference type="ChEBI" id="CHEBI:83421"/>
        <dbReference type="ChEBI" id="CHEBI:456216"/>
        <dbReference type="EC" id="2.7.11.1"/>
    </reaction>
</comment>
<comment type="catalytic activity">
    <reaction evidence="6">
        <text>L-threonyl-[protein] + ATP = O-phospho-L-threonyl-[protein] + ADP + H(+)</text>
        <dbReference type="Rhea" id="RHEA:46608"/>
        <dbReference type="Rhea" id="RHEA-COMP:11060"/>
        <dbReference type="Rhea" id="RHEA-COMP:11605"/>
        <dbReference type="ChEBI" id="CHEBI:15378"/>
        <dbReference type="ChEBI" id="CHEBI:30013"/>
        <dbReference type="ChEBI" id="CHEBI:30616"/>
        <dbReference type="ChEBI" id="CHEBI:61977"/>
        <dbReference type="ChEBI" id="CHEBI:456216"/>
        <dbReference type="EC" id="2.7.11.1"/>
    </reaction>
</comment>
<comment type="subcellular location">
    <subcellularLocation>
        <location evidence="1">Basolateral cell membrane</location>
    </subcellularLocation>
</comment>
<comment type="tissue specificity">
    <text evidence="5">Expressed in developing cardiac tissue.</text>
</comment>
<comment type="developmental stage">
    <text evidence="5">Detected at 13 hours post-fertilization (hpf) in the precursor cells of adaxial cells (slow twitch muscle fibers) of the paraxial mesoderm (PubMed:29888752). At 22 hpf, detected in the developing heart (PubMed:29888752).</text>
</comment>
<comment type="disruption phenotype">
    <text evidence="5">Morpholino knockdown in the embryo causes reduced heart beating rates and cardiomyocyte numbers at 48 hours post-fertilization (hpf) (PubMed:29888752). At 72 hpf, embryos display pericardial and yolk sac effusion and pronounced cardiac malformation coupled with defects in posterior development (PubMed:29888752). Embryos also lack ventricular epicardium at 96 hpf (PubMed:29888752).</text>
</comment>
<comment type="similarity">
    <text evidence="6">Belongs to the protein kinase superfamily. Alpha-type protein kinase family. ALPK subfamily.</text>
</comment>
<name>ALPK2_DANRE</name>
<protein>
    <recommendedName>
        <fullName evidence="7">Alpha-protein kinase 2</fullName>
        <ecNumber evidence="1">2.7.11.1</ecNumber>
    </recommendedName>
    <alternativeName>
        <fullName evidence="1">Heart alpha-protein kinase</fullName>
    </alternativeName>
</protein>
<proteinExistence type="evidence at transcript level"/>
<accession>F1QU13</accession>
<gene>
    <name type="primary">alpk2</name>
</gene>
<sequence length="1966" mass="217128">MTAKRVDMAAPDNLLFLDSDAVNSSPASVPIEQNEPTHVLDNQTDDSLRSMPDPHTNTALESTGLMPVPCQDETLETHSQHNEGENESSLVSTQHMDHTRLTEMTINDEKSNNWDFDISGVKENDNSTNLNPDLIHHAGTDSVMERNLNDKQTDLNHKDETFGSLMSSEVLLLKENRQQEMSQDTNLHQCSSSESTGIEYSQTANDAISDAMNSEQSPDQPFSIASNDTDKTTSECSVQTCWDTVESAATSKTQPELHDDVKDVMCESFTTSQTLNIDYLSTDISVCLADLPETDSLNILTPASTLLGILGKNNNVLKTADVPINDSEMVQSINKDLASPNADISKTVFTQMDQNLLHVTDHNVKVLESNRADTVVDQYVFSENIGQEVSQASSHDEDLNSSVQSHDQQLSTANSEIEETSSEFHTQTCQDIHEGVIIAEEAMNGHNTLPEMHDIADVTTSQTPIMKDPMIDEPSYLPDLHKADTPNVITTASTLSDTLETDDSIFETADVSVSDCELIQTVTLKTVTTYETLLMMHDVGEDLTCCDFTTSAIEEPETSHPLSLDDLHESNTPNIPPHASALLDSLGMNKNFLETADVPVSDCEVIQTVTFETVTTYETFPVMHDIAEDLTCCDFTTSETPKIEEPETSHSLSLDDLNEANTPNILPHASALLESLGMNNNFLEAADMPVSDREIIHPVNKDLDSSSVEICTVVLTQTDPKEVQDSDLDEKETESNRIDDSIDGMIDTKFSLDVSKLQPVCSNDLSGTVIHSESLFSQSIPDTPQIGEKYKNDLLQVISPPTPVTNEDLGNCSEEIDDACLKFTGTERDVEGDSELWLEPSQFLAGEEDEGAIFDKWGRSCSSSPPTTHPDNTKASDYTWRENISIDHNAEDWELTFPPVERWSSSDSWASALSDWFQAVNTYPEDSFKSASTGSKLGMAIQDNILEQRTSSDNANNDEQTCLSLNLMQPDEPGQALERGLVKSDNTNGTVFKQGDKERLASCLDMDKDTTTMESQMSLLETSTPESHKADNNAVMETFNASLTHEFNAKLHGSLDISGKLLSAKREGNVLVEVTGGKVSQLGLVFEEERQSIFTSPSSSAYTRDKNLTGCVSNEERCHSSDVHLCICPSQSDSHVSSKAGHAEGNGSFLHSNIGNCTVKPYVEENIPQFIMPFAPICTGNTFLHRSFLKEDRSQADLDLPDKKIINKINLKSNKKSSSSDDSSEDNFHTCPDQSLSSSSGDSDDPSITDSGRKPAYSDTCDIGKELSKLLLLTGEHFMVSEDKRIAYVTLDLDESQHFGRFSLPNCEKQSKPDNMPHKTSKTSSDGKMRSKHKEKPDDKQQHGIQASKKQDPQPQSQVKNEGAGCEDCPVAVIETIVITEKIIPKTQGKKKKKHVQHGTPKPENDAPTDVRSESRQKNVNGKAENLELKVASNSLNKPVAQPSGKTDITKKDSAQKVMSVRPKVEPSMAKMDPAGVNATQKSSPIKLKADTFNTAKMENKTCTTDSLSTCLPSMLNDDIKRRRIADDLSRAVPIRTRPQLPAIFRQARKDGEDVTRRAYSEVVKQKNSTPKEVVVPRVVSEIQADPVPADPQNISLWCQFSPIPPEATIKWTKEAAVLSEINKVEKEDGRFTLTIIKACSKDLGFYKCSLIVANISVSTSEYHLTSEVLMELVIPSHDQPAEPRVMEGDEENIQCSPLLFKEDFLSDQYFGKNQPASILTEKVHFGEGMHRKAFRTTLTEGNLPRFRPGHPCVLKVHNSISYGTKNNEELVQKNYSLAVEECHVQNTAREYIKAYNSVAKSAESFGDLPEIIPIYLVHRPSNDIPYATLEEELLGDFVKYSVKDGKEINLMRRDSEAGQKCCAFQHWVYTQTEGNLLVTDMQGVGMKLTDVGIATCKKGYKGFRGNCATSFIDQFKALHQCNRYCELLGLVSLQPKPKRTVAPPKPKTQPVPKKKTFGPVLNAKS</sequence>
<evidence type="ECO:0000250" key="1">
    <source>
        <dbReference type="UniProtKB" id="Q86TB3"/>
    </source>
</evidence>
<evidence type="ECO:0000255" key="2">
    <source>
        <dbReference type="PROSITE-ProRule" id="PRU00114"/>
    </source>
</evidence>
<evidence type="ECO:0000255" key="3">
    <source>
        <dbReference type="PROSITE-ProRule" id="PRU00501"/>
    </source>
</evidence>
<evidence type="ECO:0000256" key="4">
    <source>
        <dbReference type="SAM" id="MobiDB-lite"/>
    </source>
</evidence>
<evidence type="ECO:0000269" key="5">
    <source>
    </source>
</evidence>
<evidence type="ECO:0000305" key="6"/>
<evidence type="ECO:0000305" key="7">
    <source>
    </source>
</evidence>
<evidence type="ECO:0000312" key="8">
    <source>
        <dbReference type="Proteomes" id="UP000000437"/>
    </source>
</evidence>